<comment type="function">
    <text evidence="1">Catalyzes the stereoinversion of LL-2,6-diaminopimelate (L,L-DAP) to meso-diaminopimelate (meso-DAP), a precursor of L-lysine and an essential component of the bacterial peptidoglycan.</text>
</comment>
<comment type="catalytic activity">
    <reaction evidence="1">
        <text>(2S,6S)-2,6-diaminopimelate = meso-2,6-diaminopimelate</text>
        <dbReference type="Rhea" id="RHEA:15393"/>
        <dbReference type="ChEBI" id="CHEBI:57609"/>
        <dbReference type="ChEBI" id="CHEBI:57791"/>
        <dbReference type="EC" id="5.1.1.7"/>
    </reaction>
</comment>
<comment type="pathway">
    <text evidence="1">Amino-acid biosynthesis; L-lysine biosynthesis via DAP pathway; DL-2,6-diaminopimelate from LL-2,6-diaminopimelate: step 1/1.</text>
</comment>
<comment type="subunit">
    <text evidence="1">Homodimer.</text>
</comment>
<comment type="subcellular location">
    <subcellularLocation>
        <location evidence="1">Cytoplasm</location>
    </subcellularLocation>
</comment>
<comment type="similarity">
    <text evidence="1">Belongs to the diaminopimelate epimerase family.</text>
</comment>
<name>DAPF_PSEP7</name>
<reference key="1">
    <citation type="submission" date="2007-06" db="EMBL/GenBank/DDBJ databases">
        <authorList>
            <person name="Dodson R.J."/>
            <person name="Harkins D."/>
            <person name="Paulsen I.T."/>
        </authorList>
    </citation>
    <scope>NUCLEOTIDE SEQUENCE [LARGE SCALE GENOMIC DNA]</scope>
    <source>
        <strain>DSM 24068 / PA7</strain>
    </source>
</reference>
<dbReference type="EC" id="5.1.1.7" evidence="1"/>
<dbReference type="EMBL" id="CP000744">
    <property type="protein sequence ID" value="ABR83953.1"/>
    <property type="molecule type" value="Genomic_DNA"/>
</dbReference>
<dbReference type="RefSeq" id="WP_003098223.1">
    <property type="nucleotide sequence ID" value="NC_009656.1"/>
</dbReference>
<dbReference type="SMR" id="A6VE52"/>
<dbReference type="KEGG" id="pap:PSPA7_6021"/>
<dbReference type="HOGENOM" id="CLU_053306_1_1_6"/>
<dbReference type="UniPathway" id="UPA00034">
    <property type="reaction ID" value="UER00025"/>
</dbReference>
<dbReference type="Proteomes" id="UP000001582">
    <property type="component" value="Chromosome"/>
</dbReference>
<dbReference type="GO" id="GO:0005829">
    <property type="term" value="C:cytosol"/>
    <property type="evidence" value="ECO:0007669"/>
    <property type="project" value="TreeGrafter"/>
</dbReference>
<dbReference type="GO" id="GO:0008837">
    <property type="term" value="F:diaminopimelate epimerase activity"/>
    <property type="evidence" value="ECO:0007669"/>
    <property type="project" value="UniProtKB-UniRule"/>
</dbReference>
<dbReference type="GO" id="GO:0009089">
    <property type="term" value="P:lysine biosynthetic process via diaminopimelate"/>
    <property type="evidence" value="ECO:0007669"/>
    <property type="project" value="UniProtKB-UniRule"/>
</dbReference>
<dbReference type="FunFam" id="3.10.310.10:FF:000001">
    <property type="entry name" value="Diaminopimelate epimerase"/>
    <property type="match status" value="1"/>
</dbReference>
<dbReference type="FunFam" id="3.10.310.10:FF:000002">
    <property type="entry name" value="Diaminopimelate epimerase"/>
    <property type="match status" value="1"/>
</dbReference>
<dbReference type="Gene3D" id="3.10.310.10">
    <property type="entry name" value="Diaminopimelate Epimerase, Chain A, domain 1"/>
    <property type="match status" value="2"/>
</dbReference>
<dbReference type="HAMAP" id="MF_00197">
    <property type="entry name" value="DAP_epimerase"/>
    <property type="match status" value="1"/>
</dbReference>
<dbReference type="InterPro" id="IPR018510">
    <property type="entry name" value="DAP_epimerase_AS"/>
</dbReference>
<dbReference type="InterPro" id="IPR001653">
    <property type="entry name" value="DAP_epimerase_DapF"/>
</dbReference>
<dbReference type="NCBIfam" id="TIGR00652">
    <property type="entry name" value="DapF"/>
    <property type="match status" value="1"/>
</dbReference>
<dbReference type="PANTHER" id="PTHR31689:SF0">
    <property type="entry name" value="DIAMINOPIMELATE EPIMERASE"/>
    <property type="match status" value="1"/>
</dbReference>
<dbReference type="PANTHER" id="PTHR31689">
    <property type="entry name" value="DIAMINOPIMELATE EPIMERASE, CHLOROPLASTIC"/>
    <property type="match status" value="1"/>
</dbReference>
<dbReference type="Pfam" id="PF01678">
    <property type="entry name" value="DAP_epimerase"/>
    <property type="match status" value="2"/>
</dbReference>
<dbReference type="SUPFAM" id="SSF54506">
    <property type="entry name" value="Diaminopimelate epimerase-like"/>
    <property type="match status" value="1"/>
</dbReference>
<dbReference type="PROSITE" id="PS01326">
    <property type="entry name" value="DAP_EPIMERASE"/>
    <property type="match status" value="1"/>
</dbReference>
<protein>
    <recommendedName>
        <fullName evidence="1">Diaminopimelate epimerase</fullName>
        <shortName evidence="1">DAP epimerase</shortName>
        <ecNumber evidence="1">5.1.1.7</ecNumber>
    </recommendedName>
    <alternativeName>
        <fullName evidence="1">PLP-independent amino acid racemase</fullName>
    </alternativeName>
</protein>
<feature type="chain" id="PRO_1000011930" description="Diaminopimelate epimerase">
    <location>
        <begin position="1"/>
        <end position="276"/>
    </location>
</feature>
<feature type="active site" description="Proton donor" evidence="1">
    <location>
        <position position="75"/>
    </location>
</feature>
<feature type="active site" description="Proton acceptor" evidence="1">
    <location>
        <position position="219"/>
    </location>
</feature>
<feature type="binding site" evidence="1">
    <location>
        <position position="13"/>
    </location>
    <ligand>
        <name>substrate</name>
    </ligand>
</feature>
<feature type="binding site" evidence="1">
    <location>
        <position position="46"/>
    </location>
    <ligand>
        <name>substrate</name>
    </ligand>
</feature>
<feature type="binding site" evidence="1">
    <location>
        <position position="66"/>
    </location>
    <ligand>
        <name>substrate</name>
    </ligand>
</feature>
<feature type="binding site" evidence="1">
    <location>
        <begin position="76"/>
        <end position="77"/>
    </location>
    <ligand>
        <name>substrate</name>
    </ligand>
</feature>
<feature type="binding site" evidence="1">
    <location>
        <position position="159"/>
    </location>
    <ligand>
        <name>substrate</name>
    </ligand>
</feature>
<feature type="binding site" evidence="1">
    <location>
        <position position="192"/>
    </location>
    <ligand>
        <name>substrate</name>
    </ligand>
</feature>
<feature type="binding site" evidence="1">
    <location>
        <begin position="210"/>
        <end position="211"/>
    </location>
    <ligand>
        <name>substrate</name>
    </ligand>
</feature>
<feature type="binding site" evidence="1">
    <location>
        <begin position="220"/>
        <end position="221"/>
    </location>
    <ligand>
        <name>substrate</name>
    </ligand>
</feature>
<feature type="site" description="Could be important to modulate the pK values of the two catalytic cysteine residues" evidence="1">
    <location>
        <position position="161"/>
    </location>
</feature>
<feature type="site" description="Could be important to modulate the pK values of the two catalytic cysteine residues" evidence="1">
    <location>
        <position position="210"/>
    </location>
</feature>
<feature type="site" description="Important for dimerization" evidence="1">
    <location>
        <position position="270"/>
    </location>
</feature>
<organism>
    <name type="scientific">Pseudomonas paraeruginosa (strain DSM 24068 / PA7)</name>
    <name type="common">Pseudomonas aeruginosa (strain PA7)</name>
    <dbReference type="NCBI Taxonomy" id="381754"/>
    <lineage>
        <taxon>Bacteria</taxon>
        <taxon>Pseudomonadati</taxon>
        <taxon>Pseudomonadota</taxon>
        <taxon>Gammaproteobacteria</taxon>
        <taxon>Pseudomonadales</taxon>
        <taxon>Pseudomonadaceae</taxon>
        <taxon>Pseudomonas</taxon>
        <taxon>Pseudomonas paraeruginosa</taxon>
    </lineage>
</organism>
<sequence length="276" mass="30306">MLLRFTKMHGLGNDFMVLDLVSQHAHVQPKHVKLWGDRNTGVGFDQLLIVEAPSSPDVDFRYRIFNADGSEVEQCGNGARCFARFVQDKRLTVKKSIRVETKGGIIELNIRPDGQVTVDMGPPRLAPAEIPFQAEREALSYEIEVNGQRVELAAVSMGNPHGVLRVENVDSAPVHSLGPQLEVHPRFPKKANIGFLQVLDPHHARLRVWERGVGETQACGTGACAAAVAGIRQGWLQSPVQIDLPGGRLHIEWAGPGQPVMMTGPAVRVYEGQVRL</sequence>
<accession>A6VE52</accession>
<evidence type="ECO:0000255" key="1">
    <source>
        <dbReference type="HAMAP-Rule" id="MF_00197"/>
    </source>
</evidence>
<proteinExistence type="inferred from homology"/>
<keyword id="KW-0028">Amino-acid biosynthesis</keyword>
<keyword id="KW-0963">Cytoplasm</keyword>
<keyword id="KW-0413">Isomerase</keyword>
<keyword id="KW-0457">Lysine biosynthesis</keyword>
<gene>
    <name evidence="1" type="primary">dapF</name>
    <name type="ordered locus">PSPA7_6021</name>
</gene>